<protein>
    <recommendedName>
        <fullName evidence="1">Chitooligosaccharide deacetylase</fullName>
        <shortName evidence="1">COD</shortName>
        <ecNumber evidence="1">3.5.1.105</ecNumber>
    </recommendedName>
    <alternativeName>
        <fullName evidence="1">Chitin disaccharide deacetylase</fullName>
    </alternativeName>
    <alternativeName>
        <fullName evidence="1">Chitobiose deacetylase</fullName>
    </alternativeName>
    <alternativeName>
        <fullName evidence="1">Chitobiose-6P deacetylase</fullName>
    </alternativeName>
    <alternativeName>
        <fullName evidence="1">Chitotriose deacetylase</fullName>
    </alternativeName>
    <alternativeName>
        <fullName evidence="1">Chitotriose-6P deacetylase</fullName>
    </alternativeName>
</protein>
<keyword id="KW-0119">Carbohydrate metabolism</keyword>
<keyword id="KW-0146">Chitin degradation</keyword>
<keyword id="KW-0963">Cytoplasm</keyword>
<keyword id="KW-0378">Hydrolase</keyword>
<keyword id="KW-0460">Magnesium</keyword>
<keyword id="KW-0479">Metal-binding</keyword>
<keyword id="KW-0624">Polysaccharide degradation</keyword>
<keyword id="KW-1185">Reference proteome</keyword>
<dbReference type="EC" id="3.5.1.105" evidence="1"/>
<dbReference type="EMBL" id="AL590842">
    <property type="protein sequence ID" value="CAL21301.1"/>
    <property type="molecule type" value="Genomic_DNA"/>
</dbReference>
<dbReference type="EMBL" id="AE009952">
    <property type="protein sequence ID" value="AAM84829.1"/>
    <property type="molecule type" value="Genomic_DNA"/>
</dbReference>
<dbReference type="EMBL" id="AE017042">
    <property type="protein sequence ID" value="AAS62683.1"/>
    <property type="molecule type" value="Genomic_DNA"/>
</dbReference>
<dbReference type="PIR" id="AB0327">
    <property type="entry name" value="AB0327"/>
</dbReference>
<dbReference type="RefSeq" id="WP_002212244.1">
    <property type="nucleotide sequence ID" value="NZ_WUCM01000006.1"/>
</dbReference>
<dbReference type="RefSeq" id="YP_002347630.1">
    <property type="nucleotide sequence ID" value="NC_003143.1"/>
</dbReference>
<dbReference type="SMR" id="Q8ZDA6"/>
<dbReference type="IntAct" id="Q8ZDA6">
    <property type="interactions" value="9"/>
</dbReference>
<dbReference type="STRING" id="214092.YPO2682"/>
<dbReference type="PaxDb" id="214092-YPO2682"/>
<dbReference type="DNASU" id="1146202"/>
<dbReference type="EnsemblBacteria" id="AAS62683">
    <property type="protein sequence ID" value="AAS62683"/>
    <property type="gene ID" value="YP_2484"/>
</dbReference>
<dbReference type="GeneID" id="57976011"/>
<dbReference type="KEGG" id="ype:YPO2682"/>
<dbReference type="KEGG" id="ypk:y1255"/>
<dbReference type="KEGG" id="ypm:YP_2484"/>
<dbReference type="PATRIC" id="fig|214092.21.peg.3117"/>
<dbReference type="eggNOG" id="COG3394">
    <property type="taxonomic scope" value="Bacteria"/>
</dbReference>
<dbReference type="HOGENOM" id="CLU_064244_4_1_6"/>
<dbReference type="OMA" id="DHIDSHH"/>
<dbReference type="OrthoDB" id="9774177at2"/>
<dbReference type="UniPathway" id="UPA00349"/>
<dbReference type="Proteomes" id="UP000000815">
    <property type="component" value="Chromosome"/>
</dbReference>
<dbReference type="Proteomes" id="UP000001019">
    <property type="component" value="Chromosome"/>
</dbReference>
<dbReference type="Proteomes" id="UP000002490">
    <property type="component" value="Chromosome"/>
</dbReference>
<dbReference type="GO" id="GO:0005737">
    <property type="term" value="C:cytoplasm"/>
    <property type="evidence" value="ECO:0007669"/>
    <property type="project" value="UniProtKB-SubCell"/>
</dbReference>
<dbReference type="GO" id="GO:0036311">
    <property type="term" value="F:chitin disaccharide deacetylase activity"/>
    <property type="evidence" value="ECO:0007669"/>
    <property type="project" value="UniProtKB-UniRule"/>
</dbReference>
<dbReference type="GO" id="GO:0019213">
    <property type="term" value="F:deacetylase activity"/>
    <property type="evidence" value="ECO:0000318"/>
    <property type="project" value="GO_Central"/>
</dbReference>
<dbReference type="GO" id="GO:0046872">
    <property type="term" value="F:metal ion binding"/>
    <property type="evidence" value="ECO:0007669"/>
    <property type="project" value="UniProtKB-KW"/>
</dbReference>
<dbReference type="GO" id="GO:0006032">
    <property type="term" value="P:chitin catabolic process"/>
    <property type="evidence" value="ECO:0007669"/>
    <property type="project" value="UniProtKB-UniPathway"/>
</dbReference>
<dbReference type="GO" id="GO:0052777">
    <property type="term" value="P:diacetylchitobiose catabolic process"/>
    <property type="evidence" value="ECO:0000318"/>
    <property type="project" value="GO_Central"/>
</dbReference>
<dbReference type="GO" id="GO:0000272">
    <property type="term" value="P:polysaccharide catabolic process"/>
    <property type="evidence" value="ECO:0007669"/>
    <property type="project" value="UniProtKB-UniRule"/>
</dbReference>
<dbReference type="CDD" id="cd10803">
    <property type="entry name" value="YdjC_EF3048_like"/>
    <property type="match status" value="1"/>
</dbReference>
<dbReference type="FunFam" id="3.20.20.370:FF:000001">
    <property type="entry name" value="Chitooligosaccharide deacetylase"/>
    <property type="match status" value="1"/>
</dbReference>
<dbReference type="Gene3D" id="3.20.20.370">
    <property type="entry name" value="Glycoside hydrolase/deacetylase"/>
    <property type="match status" value="1"/>
</dbReference>
<dbReference type="HAMAP" id="MF_01246">
    <property type="entry name" value="COD"/>
    <property type="match status" value="1"/>
</dbReference>
<dbReference type="InterPro" id="IPR022948">
    <property type="entry name" value="COD_ChbG_bac"/>
</dbReference>
<dbReference type="InterPro" id="IPR011330">
    <property type="entry name" value="Glyco_hydro/deAcase_b/a-brl"/>
</dbReference>
<dbReference type="InterPro" id="IPR006879">
    <property type="entry name" value="YdjC-like"/>
</dbReference>
<dbReference type="NCBIfam" id="NF002559">
    <property type="entry name" value="PRK02134.1"/>
    <property type="match status" value="1"/>
</dbReference>
<dbReference type="PANTHER" id="PTHR31609:SF1">
    <property type="entry name" value="CARBOHYDRATE DEACETYLASE"/>
    <property type="match status" value="1"/>
</dbReference>
<dbReference type="PANTHER" id="PTHR31609">
    <property type="entry name" value="YDJC DEACETYLASE FAMILY MEMBER"/>
    <property type="match status" value="1"/>
</dbReference>
<dbReference type="Pfam" id="PF04794">
    <property type="entry name" value="YdjC"/>
    <property type="match status" value="1"/>
</dbReference>
<dbReference type="SUPFAM" id="SSF88713">
    <property type="entry name" value="Glycoside hydrolase/deacetylase"/>
    <property type="match status" value="1"/>
</dbReference>
<gene>
    <name evidence="1" type="primary">chbG</name>
    <name type="ordered locus">YPO2682</name>
    <name type="ordered locus">y1255</name>
    <name type="ordered locus">YP_2484</name>
</gene>
<name>CHBG_YERPE</name>
<proteinExistence type="inferred from homology"/>
<sequence>MEKLLIVNADDFGLCKGQNYGIIDAFRNGVVSSTTAMMNSVDINHAAELSAQYPALPVGMHFVLTFGRPLTAMPSLTDANGELGKWLWQRAGAGTLDLNEIAQELECQFERFSAVFGRPPTHIDSHHHVHMLPQIYPLVAAFAREKSLPLRIDRHEVQQHGLTLDNPRSSEWFNAGFYGENLSEPSFLQLLEHADQQGVNSLEIMCHPAFIDQTLMTSGYCYPRLTELAILTSPTLKPAIAQRGYRLGSFLDC</sequence>
<feature type="chain" id="PRO_0000051607" description="Chitooligosaccharide deacetylase">
    <location>
        <begin position="1"/>
        <end position="253"/>
    </location>
</feature>
<feature type="binding site" evidence="1">
    <location>
        <position position="61"/>
    </location>
    <ligand>
        <name>Mg(2+)</name>
        <dbReference type="ChEBI" id="CHEBI:18420"/>
    </ligand>
</feature>
<feature type="binding site" evidence="1">
    <location>
        <position position="126"/>
    </location>
    <ligand>
        <name>Mg(2+)</name>
        <dbReference type="ChEBI" id="CHEBI:18420"/>
    </ligand>
</feature>
<comment type="function">
    <text evidence="1">Involved in the degradation of chitin. ChbG is essential for growth on the acetylated chitooligosaccharides chitobiose and chitotriose but is dispensable for growth on cellobiose and chitosan dimer, the deacetylated form of chitobiose. Deacetylation of chitobiose-6-P and chitotriose-6-P is necessary for both the activation of the chb promoter by the regulatory protein ChbR and the hydrolysis of phosphorylated beta-glucosides by the phospho-beta-glucosidase ChbF. Catalyzes the removal of only one acetyl group from chitobiose-6-P to yield monoacetylchitobiose-6-P, the inducer of ChbR and the substrate of ChbF.</text>
</comment>
<comment type="catalytic activity">
    <reaction evidence="1">
        <text>N,N'-diacetylchitobiose + H2O = N-acetyl-beta-D-glucosaminyl-(1-&gt;4)-D-glucosamine + acetate</text>
        <dbReference type="Rhea" id="RHEA:27469"/>
        <dbReference type="ChEBI" id="CHEBI:15377"/>
        <dbReference type="ChEBI" id="CHEBI:28681"/>
        <dbReference type="ChEBI" id="CHEBI:30089"/>
        <dbReference type="ChEBI" id="CHEBI:59910"/>
        <dbReference type="EC" id="3.5.1.105"/>
    </reaction>
</comment>
<comment type="catalytic activity">
    <reaction evidence="1">
        <text>diacetylchitobiose-6'-phosphate + H2O = N'-monoacetylchitobiose-6'-phosphate + acetate</text>
        <dbReference type="Rhea" id="RHEA:35083"/>
        <dbReference type="ChEBI" id="CHEBI:15377"/>
        <dbReference type="ChEBI" id="CHEBI:30089"/>
        <dbReference type="ChEBI" id="CHEBI:64883"/>
        <dbReference type="ChEBI" id="CHEBI:71315"/>
    </reaction>
</comment>
<comment type="cofactor">
    <cofactor evidence="1">
        <name>Mg(2+)</name>
        <dbReference type="ChEBI" id="CHEBI:18420"/>
    </cofactor>
</comment>
<comment type="pathway">
    <text evidence="1">Glycan degradation; chitin degradation.</text>
</comment>
<comment type="subunit">
    <text evidence="1">Homodimer.</text>
</comment>
<comment type="subcellular location">
    <subcellularLocation>
        <location evidence="1">Cytoplasm</location>
    </subcellularLocation>
</comment>
<comment type="similarity">
    <text evidence="1">Belongs to the YdjC deacetylase family. ChbG subfamily.</text>
</comment>
<accession>Q8ZDA6</accession>
<accession>Q0WDK8</accession>
<reference key="1">
    <citation type="journal article" date="2001" name="Nature">
        <title>Genome sequence of Yersinia pestis, the causative agent of plague.</title>
        <authorList>
            <person name="Parkhill J."/>
            <person name="Wren B.W."/>
            <person name="Thomson N.R."/>
            <person name="Titball R.W."/>
            <person name="Holden M.T.G."/>
            <person name="Prentice M.B."/>
            <person name="Sebaihia M."/>
            <person name="James K.D."/>
            <person name="Churcher C.M."/>
            <person name="Mungall K.L."/>
            <person name="Baker S."/>
            <person name="Basham D."/>
            <person name="Bentley S.D."/>
            <person name="Brooks K."/>
            <person name="Cerdeno-Tarraga A.-M."/>
            <person name="Chillingworth T."/>
            <person name="Cronin A."/>
            <person name="Davies R.M."/>
            <person name="Davis P."/>
            <person name="Dougan G."/>
            <person name="Feltwell T."/>
            <person name="Hamlin N."/>
            <person name="Holroyd S."/>
            <person name="Jagels K."/>
            <person name="Karlyshev A.V."/>
            <person name="Leather S."/>
            <person name="Moule S."/>
            <person name="Oyston P.C.F."/>
            <person name="Quail M.A."/>
            <person name="Rutherford K.M."/>
            <person name="Simmonds M."/>
            <person name="Skelton J."/>
            <person name="Stevens K."/>
            <person name="Whitehead S."/>
            <person name="Barrell B.G."/>
        </authorList>
    </citation>
    <scope>NUCLEOTIDE SEQUENCE [LARGE SCALE GENOMIC DNA]</scope>
    <source>
        <strain>CO-92 / Biovar Orientalis</strain>
    </source>
</reference>
<reference key="2">
    <citation type="journal article" date="2002" name="J. Bacteriol.">
        <title>Genome sequence of Yersinia pestis KIM.</title>
        <authorList>
            <person name="Deng W."/>
            <person name="Burland V."/>
            <person name="Plunkett G. III"/>
            <person name="Boutin A."/>
            <person name="Mayhew G.F."/>
            <person name="Liss P."/>
            <person name="Perna N.T."/>
            <person name="Rose D.J."/>
            <person name="Mau B."/>
            <person name="Zhou S."/>
            <person name="Schwartz D.C."/>
            <person name="Fetherston J.D."/>
            <person name="Lindler L.E."/>
            <person name="Brubaker R.R."/>
            <person name="Plano G.V."/>
            <person name="Straley S.C."/>
            <person name="McDonough K.A."/>
            <person name="Nilles M.L."/>
            <person name="Matson J.S."/>
            <person name="Blattner F.R."/>
            <person name="Perry R.D."/>
        </authorList>
    </citation>
    <scope>NUCLEOTIDE SEQUENCE [LARGE SCALE GENOMIC DNA]</scope>
    <source>
        <strain>KIM10+ / Biovar Mediaevalis</strain>
    </source>
</reference>
<reference key="3">
    <citation type="journal article" date="2004" name="DNA Res.">
        <title>Complete genome sequence of Yersinia pestis strain 91001, an isolate avirulent to humans.</title>
        <authorList>
            <person name="Song Y."/>
            <person name="Tong Z."/>
            <person name="Wang J."/>
            <person name="Wang L."/>
            <person name="Guo Z."/>
            <person name="Han Y."/>
            <person name="Zhang J."/>
            <person name="Pei D."/>
            <person name="Zhou D."/>
            <person name="Qin H."/>
            <person name="Pang X."/>
            <person name="Han Y."/>
            <person name="Zhai J."/>
            <person name="Li M."/>
            <person name="Cui B."/>
            <person name="Qi Z."/>
            <person name="Jin L."/>
            <person name="Dai R."/>
            <person name="Chen F."/>
            <person name="Li S."/>
            <person name="Ye C."/>
            <person name="Du Z."/>
            <person name="Lin W."/>
            <person name="Wang J."/>
            <person name="Yu J."/>
            <person name="Yang H."/>
            <person name="Wang J."/>
            <person name="Huang P."/>
            <person name="Yang R."/>
        </authorList>
    </citation>
    <scope>NUCLEOTIDE SEQUENCE [LARGE SCALE GENOMIC DNA]</scope>
    <source>
        <strain>91001 / Biovar Mediaevalis</strain>
    </source>
</reference>
<evidence type="ECO:0000255" key="1">
    <source>
        <dbReference type="HAMAP-Rule" id="MF_01246"/>
    </source>
</evidence>
<organism>
    <name type="scientific">Yersinia pestis</name>
    <dbReference type="NCBI Taxonomy" id="632"/>
    <lineage>
        <taxon>Bacteria</taxon>
        <taxon>Pseudomonadati</taxon>
        <taxon>Pseudomonadota</taxon>
        <taxon>Gammaproteobacteria</taxon>
        <taxon>Enterobacterales</taxon>
        <taxon>Yersiniaceae</taxon>
        <taxon>Yersinia</taxon>
    </lineage>
</organism>